<sequence>MTTVYYDQDVKTDALQGKKIAVVGYGSQGHAHAQNLKDNGYDVVIGIRPGRSFDKAKEDGFDVFPVAEAVKQADVIMVLLPDEIQGDVYKNEIEPNLEKHNALAFAHGFNIHFGVIQPPADVDVFLVAPKGPGHLVRRTFVEGSAVPSLFGIQQDASGQARNIALSYAKGIGATRAGVIETTFKEETETDLFGEQAVLCGGVSKLIQSGFETLVEAGYQPELAYFEVLHEMKLIVDLMYEGGTENVRYSISNTAEFGDYVSGPRVITPDVKENMKAVLTDIQNGNFSNRFIEDNKNGFKEFYKLREEQHGHQIEKVGRELREMMPFIKSKSIEK</sequence>
<protein>
    <recommendedName>
        <fullName evidence="1">Ketol-acid reductoisomerase (NADP(+))</fullName>
        <shortName evidence="1">KARI</shortName>
        <ecNumber evidence="1">1.1.1.86</ecNumber>
    </recommendedName>
    <alternativeName>
        <fullName evidence="1">Acetohydroxy-acid isomeroreductase</fullName>
        <shortName evidence="1">AHIR</shortName>
    </alternativeName>
    <alternativeName>
        <fullName evidence="1">Alpha-keto-beta-hydroxylacyl reductoisomerase</fullName>
    </alternativeName>
    <alternativeName>
        <fullName evidence="1">Ketol-acid reductoisomerase type 1</fullName>
    </alternativeName>
    <alternativeName>
        <fullName evidence="1">Ketol-acid reductoisomerase type I</fullName>
    </alternativeName>
</protein>
<feature type="chain" id="PRO_0000151359" description="Ketol-acid reductoisomerase (NADP(+))">
    <location>
        <begin position="1"/>
        <end position="334"/>
    </location>
</feature>
<feature type="domain" description="KARI N-terminal Rossmann" evidence="2">
    <location>
        <begin position="1"/>
        <end position="181"/>
    </location>
</feature>
<feature type="domain" description="KARI C-terminal knotted" evidence="3">
    <location>
        <begin position="182"/>
        <end position="327"/>
    </location>
</feature>
<feature type="active site" evidence="1">
    <location>
        <position position="107"/>
    </location>
</feature>
<feature type="binding site" evidence="1">
    <location>
        <begin position="25"/>
        <end position="28"/>
    </location>
    <ligand>
        <name>NADP(+)</name>
        <dbReference type="ChEBI" id="CHEBI:58349"/>
    </ligand>
</feature>
<feature type="binding site" evidence="1">
    <location>
        <position position="48"/>
    </location>
    <ligand>
        <name>NADP(+)</name>
        <dbReference type="ChEBI" id="CHEBI:58349"/>
    </ligand>
</feature>
<feature type="binding site" evidence="1">
    <location>
        <position position="52"/>
    </location>
    <ligand>
        <name>NADP(+)</name>
        <dbReference type="ChEBI" id="CHEBI:58349"/>
    </ligand>
</feature>
<feature type="binding site" evidence="1">
    <location>
        <begin position="82"/>
        <end position="85"/>
    </location>
    <ligand>
        <name>NADP(+)</name>
        <dbReference type="ChEBI" id="CHEBI:58349"/>
    </ligand>
</feature>
<feature type="binding site" evidence="1">
    <location>
        <position position="133"/>
    </location>
    <ligand>
        <name>NADP(+)</name>
        <dbReference type="ChEBI" id="CHEBI:58349"/>
    </ligand>
</feature>
<feature type="binding site" evidence="1">
    <location>
        <position position="190"/>
    </location>
    <ligand>
        <name>Mg(2+)</name>
        <dbReference type="ChEBI" id="CHEBI:18420"/>
        <label>1</label>
    </ligand>
</feature>
<feature type="binding site" evidence="1">
    <location>
        <position position="190"/>
    </location>
    <ligand>
        <name>Mg(2+)</name>
        <dbReference type="ChEBI" id="CHEBI:18420"/>
        <label>2</label>
    </ligand>
</feature>
<feature type="binding site" evidence="1">
    <location>
        <position position="194"/>
    </location>
    <ligand>
        <name>Mg(2+)</name>
        <dbReference type="ChEBI" id="CHEBI:18420"/>
        <label>1</label>
    </ligand>
</feature>
<feature type="binding site" evidence="1">
    <location>
        <position position="226"/>
    </location>
    <ligand>
        <name>Mg(2+)</name>
        <dbReference type="ChEBI" id="CHEBI:18420"/>
        <label>2</label>
    </ligand>
</feature>
<feature type="binding site" evidence="1">
    <location>
        <position position="230"/>
    </location>
    <ligand>
        <name>Mg(2+)</name>
        <dbReference type="ChEBI" id="CHEBI:18420"/>
        <label>2</label>
    </ligand>
</feature>
<feature type="binding site" evidence="1">
    <location>
        <position position="251"/>
    </location>
    <ligand>
        <name>substrate</name>
    </ligand>
</feature>
<dbReference type="EC" id="1.1.1.86" evidence="1"/>
<dbReference type="EMBL" id="BX571857">
    <property type="protein sequence ID" value="CAG43768.1"/>
    <property type="molecule type" value="Genomic_DNA"/>
</dbReference>
<dbReference type="RefSeq" id="WP_000214555.1">
    <property type="nucleotide sequence ID" value="NC_002953.3"/>
</dbReference>
<dbReference type="SMR" id="Q6G7Q2"/>
<dbReference type="KEGG" id="sas:SAS1961"/>
<dbReference type="HOGENOM" id="CLU_033821_0_1_9"/>
<dbReference type="UniPathway" id="UPA00047">
    <property type="reaction ID" value="UER00056"/>
</dbReference>
<dbReference type="UniPathway" id="UPA00049">
    <property type="reaction ID" value="UER00060"/>
</dbReference>
<dbReference type="GO" id="GO:0005829">
    <property type="term" value="C:cytosol"/>
    <property type="evidence" value="ECO:0007669"/>
    <property type="project" value="TreeGrafter"/>
</dbReference>
<dbReference type="GO" id="GO:0004455">
    <property type="term" value="F:ketol-acid reductoisomerase activity"/>
    <property type="evidence" value="ECO:0007669"/>
    <property type="project" value="UniProtKB-UniRule"/>
</dbReference>
<dbReference type="GO" id="GO:0000287">
    <property type="term" value="F:magnesium ion binding"/>
    <property type="evidence" value="ECO:0007669"/>
    <property type="project" value="UniProtKB-UniRule"/>
</dbReference>
<dbReference type="GO" id="GO:0050661">
    <property type="term" value="F:NADP binding"/>
    <property type="evidence" value="ECO:0007669"/>
    <property type="project" value="InterPro"/>
</dbReference>
<dbReference type="GO" id="GO:0009097">
    <property type="term" value="P:isoleucine biosynthetic process"/>
    <property type="evidence" value="ECO:0007669"/>
    <property type="project" value="UniProtKB-UniRule"/>
</dbReference>
<dbReference type="GO" id="GO:0009099">
    <property type="term" value="P:L-valine biosynthetic process"/>
    <property type="evidence" value="ECO:0007669"/>
    <property type="project" value="UniProtKB-UniRule"/>
</dbReference>
<dbReference type="FunFam" id="3.40.50.720:FF:000023">
    <property type="entry name" value="Ketol-acid reductoisomerase (NADP(+))"/>
    <property type="match status" value="1"/>
</dbReference>
<dbReference type="Gene3D" id="6.10.240.10">
    <property type="match status" value="1"/>
</dbReference>
<dbReference type="Gene3D" id="3.40.50.720">
    <property type="entry name" value="NAD(P)-binding Rossmann-like Domain"/>
    <property type="match status" value="1"/>
</dbReference>
<dbReference type="HAMAP" id="MF_00435">
    <property type="entry name" value="IlvC"/>
    <property type="match status" value="1"/>
</dbReference>
<dbReference type="InterPro" id="IPR008927">
    <property type="entry name" value="6-PGluconate_DH-like_C_sf"/>
</dbReference>
<dbReference type="InterPro" id="IPR013023">
    <property type="entry name" value="KARI"/>
</dbReference>
<dbReference type="InterPro" id="IPR000506">
    <property type="entry name" value="KARI_C"/>
</dbReference>
<dbReference type="InterPro" id="IPR013116">
    <property type="entry name" value="KARI_N"/>
</dbReference>
<dbReference type="InterPro" id="IPR014359">
    <property type="entry name" value="KARI_prok"/>
</dbReference>
<dbReference type="InterPro" id="IPR036291">
    <property type="entry name" value="NAD(P)-bd_dom_sf"/>
</dbReference>
<dbReference type="NCBIfam" id="TIGR00465">
    <property type="entry name" value="ilvC"/>
    <property type="match status" value="1"/>
</dbReference>
<dbReference type="NCBIfam" id="NF004017">
    <property type="entry name" value="PRK05479.1"/>
    <property type="match status" value="1"/>
</dbReference>
<dbReference type="NCBIfam" id="NF009940">
    <property type="entry name" value="PRK13403.1"/>
    <property type="match status" value="1"/>
</dbReference>
<dbReference type="PANTHER" id="PTHR21371">
    <property type="entry name" value="KETOL-ACID REDUCTOISOMERASE, MITOCHONDRIAL"/>
    <property type="match status" value="1"/>
</dbReference>
<dbReference type="PANTHER" id="PTHR21371:SF1">
    <property type="entry name" value="KETOL-ACID REDUCTOISOMERASE, MITOCHONDRIAL"/>
    <property type="match status" value="1"/>
</dbReference>
<dbReference type="Pfam" id="PF01450">
    <property type="entry name" value="KARI_C"/>
    <property type="match status" value="1"/>
</dbReference>
<dbReference type="Pfam" id="PF07991">
    <property type="entry name" value="KARI_N"/>
    <property type="match status" value="1"/>
</dbReference>
<dbReference type="PIRSF" id="PIRSF000116">
    <property type="entry name" value="IlvC_gammaproteo"/>
    <property type="match status" value="1"/>
</dbReference>
<dbReference type="SUPFAM" id="SSF48179">
    <property type="entry name" value="6-phosphogluconate dehydrogenase C-terminal domain-like"/>
    <property type="match status" value="1"/>
</dbReference>
<dbReference type="SUPFAM" id="SSF51735">
    <property type="entry name" value="NAD(P)-binding Rossmann-fold domains"/>
    <property type="match status" value="1"/>
</dbReference>
<dbReference type="PROSITE" id="PS51851">
    <property type="entry name" value="KARI_C"/>
    <property type="match status" value="1"/>
</dbReference>
<dbReference type="PROSITE" id="PS51850">
    <property type="entry name" value="KARI_N"/>
    <property type="match status" value="1"/>
</dbReference>
<proteinExistence type="inferred from homology"/>
<reference key="1">
    <citation type="journal article" date="2004" name="Proc. Natl. Acad. Sci. U.S.A.">
        <title>Complete genomes of two clinical Staphylococcus aureus strains: evidence for the rapid evolution of virulence and drug resistance.</title>
        <authorList>
            <person name="Holden M.T.G."/>
            <person name="Feil E.J."/>
            <person name="Lindsay J.A."/>
            <person name="Peacock S.J."/>
            <person name="Day N.P.J."/>
            <person name="Enright M.C."/>
            <person name="Foster T.J."/>
            <person name="Moore C.E."/>
            <person name="Hurst L."/>
            <person name="Atkin R."/>
            <person name="Barron A."/>
            <person name="Bason N."/>
            <person name="Bentley S.D."/>
            <person name="Chillingworth C."/>
            <person name="Chillingworth T."/>
            <person name="Churcher C."/>
            <person name="Clark L."/>
            <person name="Corton C."/>
            <person name="Cronin A."/>
            <person name="Doggett J."/>
            <person name="Dowd L."/>
            <person name="Feltwell T."/>
            <person name="Hance Z."/>
            <person name="Harris B."/>
            <person name="Hauser H."/>
            <person name="Holroyd S."/>
            <person name="Jagels K."/>
            <person name="James K.D."/>
            <person name="Lennard N."/>
            <person name="Line A."/>
            <person name="Mayes R."/>
            <person name="Moule S."/>
            <person name="Mungall K."/>
            <person name="Ormond D."/>
            <person name="Quail M.A."/>
            <person name="Rabbinowitsch E."/>
            <person name="Rutherford K.M."/>
            <person name="Sanders M."/>
            <person name="Sharp S."/>
            <person name="Simmonds M."/>
            <person name="Stevens K."/>
            <person name="Whitehead S."/>
            <person name="Barrell B.G."/>
            <person name="Spratt B.G."/>
            <person name="Parkhill J."/>
        </authorList>
    </citation>
    <scope>NUCLEOTIDE SEQUENCE [LARGE SCALE GENOMIC DNA]</scope>
    <source>
        <strain>MSSA476</strain>
    </source>
</reference>
<evidence type="ECO:0000255" key="1">
    <source>
        <dbReference type="HAMAP-Rule" id="MF_00435"/>
    </source>
</evidence>
<evidence type="ECO:0000255" key="2">
    <source>
        <dbReference type="PROSITE-ProRule" id="PRU01197"/>
    </source>
</evidence>
<evidence type="ECO:0000255" key="3">
    <source>
        <dbReference type="PROSITE-ProRule" id="PRU01198"/>
    </source>
</evidence>
<gene>
    <name evidence="1" type="primary">ilvC</name>
    <name type="ordered locus">SAS1961</name>
</gene>
<name>ILVC_STAAS</name>
<keyword id="KW-0028">Amino-acid biosynthesis</keyword>
<keyword id="KW-0100">Branched-chain amino acid biosynthesis</keyword>
<keyword id="KW-0460">Magnesium</keyword>
<keyword id="KW-0479">Metal-binding</keyword>
<keyword id="KW-0521">NADP</keyword>
<keyword id="KW-0560">Oxidoreductase</keyword>
<organism>
    <name type="scientific">Staphylococcus aureus (strain MSSA476)</name>
    <dbReference type="NCBI Taxonomy" id="282459"/>
    <lineage>
        <taxon>Bacteria</taxon>
        <taxon>Bacillati</taxon>
        <taxon>Bacillota</taxon>
        <taxon>Bacilli</taxon>
        <taxon>Bacillales</taxon>
        <taxon>Staphylococcaceae</taxon>
        <taxon>Staphylococcus</taxon>
    </lineage>
</organism>
<comment type="function">
    <text evidence="1">Involved in the biosynthesis of branched-chain amino acids (BCAA). Catalyzes an alkyl-migration followed by a ketol-acid reduction of (S)-2-acetolactate (S2AL) to yield (R)-2,3-dihydroxy-isovalerate. In the isomerase reaction, S2AL is rearranged via a Mg-dependent methyl migration to produce 3-hydroxy-3-methyl-2-ketobutyrate (HMKB). In the reductase reaction, this 2-ketoacid undergoes a metal-dependent reduction by NADPH to yield (R)-2,3-dihydroxy-isovalerate.</text>
</comment>
<comment type="catalytic activity">
    <reaction evidence="1">
        <text>(2R)-2,3-dihydroxy-3-methylbutanoate + NADP(+) = (2S)-2-acetolactate + NADPH + H(+)</text>
        <dbReference type="Rhea" id="RHEA:22068"/>
        <dbReference type="ChEBI" id="CHEBI:15378"/>
        <dbReference type="ChEBI" id="CHEBI:49072"/>
        <dbReference type="ChEBI" id="CHEBI:57783"/>
        <dbReference type="ChEBI" id="CHEBI:58349"/>
        <dbReference type="ChEBI" id="CHEBI:58476"/>
        <dbReference type="EC" id="1.1.1.86"/>
    </reaction>
</comment>
<comment type="catalytic activity">
    <reaction evidence="1">
        <text>(2R,3R)-2,3-dihydroxy-3-methylpentanoate + NADP(+) = (S)-2-ethyl-2-hydroxy-3-oxobutanoate + NADPH + H(+)</text>
        <dbReference type="Rhea" id="RHEA:13493"/>
        <dbReference type="ChEBI" id="CHEBI:15378"/>
        <dbReference type="ChEBI" id="CHEBI:49256"/>
        <dbReference type="ChEBI" id="CHEBI:49258"/>
        <dbReference type="ChEBI" id="CHEBI:57783"/>
        <dbReference type="ChEBI" id="CHEBI:58349"/>
        <dbReference type="EC" id="1.1.1.86"/>
    </reaction>
</comment>
<comment type="cofactor">
    <cofactor evidence="1">
        <name>Mg(2+)</name>
        <dbReference type="ChEBI" id="CHEBI:18420"/>
    </cofactor>
    <text evidence="1">Binds 2 magnesium ions per subunit.</text>
</comment>
<comment type="pathway">
    <text evidence="1">Amino-acid biosynthesis; L-isoleucine biosynthesis; L-isoleucine from 2-oxobutanoate: step 2/4.</text>
</comment>
<comment type="pathway">
    <text evidence="1">Amino-acid biosynthesis; L-valine biosynthesis; L-valine from pyruvate: step 2/4.</text>
</comment>
<comment type="similarity">
    <text evidence="1">Belongs to the ketol-acid reductoisomerase family.</text>
</comment>
<accession>Q6G7Q2</accession>